<sequence length="465" mass="52406">MSFLVAIVGRANVGKSTLFNVLTNSHDALVFDFEGVTRDRQYGQAKYDDLDYLVVDTGGISDKDVGFDEFMAKQSQIAIDEANLVFFVVDGRSGLTTGDEYVASLLRQKDKKVVVVVNKVDGTDEEAAMAEFYSFGFDKVFAISAAHRRNTQKLVDKFLKKPLNEYYQDYTQTQEHKEQQRHGIHFSLIGRPNVGKSTLTNRMLGEDRVVVFDMPGTTIDSVSIPFERHGQKYTIVDTAGVRKRGKVKQTLEKFSVIKTLQAIQDSNVVVAVVDARQGISDQDLSLIHFAIKNGRALVLAVNKWDGMTEEDRIQVKQDLKRKLFFLQDYVDIHFISALHGTNVGHVFESIDTAYACANKKITTADATCLMQLAVEAHSLPMVGKFRIKLKYAHVGGHNPPVIVIHGNQVSRLPNSYKRYLENFFREALDFRGTPIVFEFKQSENPFADRKNKRSKDEGSKSKKVK</sequence>
<feature type="chain" id="PRO_1000099123" description="GTPase Der">
    <location>
        <begin position="1"/>
        <end position="465"/>
    </location>
</feature>
<feature type="domain" description="EngA-type G 1">
    <location>
        <begin position="3"/>
        <end position="166"/>
    </location>
</feature>
<feature type="domain" description="EngA-type G 2">
    <location>
        <begin position="184"/>
        <end position="358"/>
    </location>
</feature>
<feature type="domain" description="KH-like" evidence="1">
    <location>
        <begin position="359"/>
        <end position="443"/>
    </location>
</feature>
<feature type="region of interest" description="Disordered" evidence="2">
    <location>
        <begin position="446"/>
        <end position="465"/>
    </location>
</feature>
<feature type="binding site" evidence="1">
    <location>
        <begin position="9"/>
        <end position="16"/>
    </location>
    <ligand>
        <name>GTP</name>
        <dbReference type="ChEBI" id="CHEBI:37565"/>
        <label>1</label>
    </ligand>
</feature>
<feature type="binding site" evidence="1">
    <location>
        <begin position="56"/>
        <end position="60"/>
    </location>
    <ligand>
        <name>GTP</name>
        <dbReference type="ChEBI" id="CHEBI:37565"/>
        <label>1</label>
    </ligand>
</feature>
<feature type="binding site" evidence="1">
    <location>
        <begin position="118"/>
        <end position="121"/>
    </location>
    <ligand>
        <name>GTP</name>
        <dbReference type="ChEBI" id="CHEBI:37565"/>
        <label>1</label>
    </ligand>
</feature>
<feature type="binding site" evidence="1">
    <location>
        <begin position="190"/>
        <end position="197"/>
    </location>
    <ligand>
        <name>GTP</name>
        <dbReference type="ChEBI" id="CHEBI:37565"/>
        <label>2</label>
    </ligand>
</feature>
<feature type="binding site" evidence="1">
    <location>
        <begin position="237"/>
        <end position="241"/>
    </location>
    <ligand>
        <name>GTP</name>
        <dbReference type="ChEBI" id="CHEBI:37565"/>
        <label>2</label>
    </ligand>
</feature>
<feature type="binding site" evidence="1">
    <location>
        <begin position="302"/>
        <end position="305"/>
    </location>
    <ligand>
        <name>GTP</name>
        <dbReference type="ChEBI" id="CHEBI:37565"/>
        <label>2</label>
    </ligand>
</feature>
<proteinExistence type="inferred from homology"/>
<gene>
    <name evidence="1" type="primary">der</name>
    <name type="synonym">engA</name>
    <name type="ordered locus">FTM_0510</name>
</gene>
<name>DER_FRATM</name>
<comment type="function">
    <text evidence="1">GTPase that plays an essential role in the late steps of ribosome biogenesis.</text>
</comment>
<comment type="subunit">
    <text evidence="1">Associates with the 50S ribosomal subunit.</text>
</comment>
<comment type="similarity">
    <text evidence="1">Belongs to the TRAFAC class TrmE-Era-EngA-EngB-Septin-like GTPase superfamily. EngA (Der) GTPase family.</text>
</comment>
<reference key="1">
    <citation type="journal article" date="2009" name="PLoS Pathog.">
        <title>Molecular evolutionary consequences of niche restriction in Francisella tularensis, a facultative intracellular pathogen.</title>
        <authorList>
            <person name="Larsson P."/>
            <person name="Elfsmark D."/>
            <person name="Svensson K."/>
            <person name="Wikstroem P."/>
            <person name="Forsman M."/>
            <person name="Brettin T."/>
            <person name="Keim P."/>
            <person name="Johansson A."/>
        </authorList>
    </citation>
    <scope>NUCLEOTIDE SEQUENCE [LARGE SCALE GENOMIC DNA]</scope>
    <source>
        <strain>FSC147</strain>
    </source>
</reference>
<organism>
    <name type="scientific">Francisella tularensis subsp. mediasiatica (strain FSC147)</name>
    <dbReference type="NCBI Taxonomy" id="441952"/>
    <lineage>
        <taxon>Bacteria</taxon>
        <taxon>Pseudomonadati</taxon>
        <taxon>Pseudomonadota</taxon>
        <taxon>Gammaproteobacteria</taxon>
        <taxon>Thiotrichales</taxon>
        <taxon>Francisellaceae</taxon>
        <taxon>Francisella</taxon>
    </lineage>
</organism>
<protein>
    <recommendedName>
        <fullName evidence="1">GTPase Der</fullName>
    </recommendedName>
    <alternativeName>
        <fullName evidence="1">GTP-binding protein EngA</fullName>
    </alternativeName>
</protein>
<evidence type="ECO:0000255" key="1">
    <source>
        <dbReference type="HAMAP-Rule" id="MF_00195"/>
    </source>
</evidence>
<evidence type="ECO:0000256" key="2">
    <source>
        <dbReference type="SAM" id="MobiDB-lite"/>
    </source>
</evidence>
<accession>B2SF94</accession>
<dbReference type="EMBL" id="CP000915">
    <property type="protein sequence ID" value="ACD30526.1"/>
    <property type="molecule type" value="Genomic_DNA"/>
</dbReference>
<dbReference type="SMR" id="B2SF94"/>
<dbReference type="KEGG" id="ftm:FTM_0510"/>
<dbReference type="HOGENOM" id="CLU_016077_6_2_6"/>
<dbReference type="GO" id="GO:0005525">
    <property type="term" value="F:GTP binding"/>
    <property type="evidence" value="ECO:0007669"/>
    <property type="project" value="UniProtKB-UniRule"/>
</dbReference>
<dbReference type="GO" id="GO:0043022">
    <property type="term" value="F:ribosome binding"/>
    <property type="evidence" value="ECO:0007669"/>
    <property type="project" value="TreeGrafter"/>
</dbReference>
<dbReference type="GO" id="GO:0042254">
    <property type="term" value="P:ribosome biogenesis"/>
    <property type="evidence" value="ECO:0007669"/>
    <property type="project" value="UniProtKB-KW"/>
</dbReference>
<dbReference type="CDD" id="cd01894">
    <property type="entry name" value="EngA1"/>
    <property type="match status" value="1"/>
</dbReference>
<dbReference type="CDD" id="cd01895">
    <property type="entry name" value="EngA2"/>
    <property type="match status" value="1"/>
</dbReference>
<dbReference type="FunFam" id="3.30.300.20:FF:000004">
    <property type="entry name" value="GTPase Der"/>
    <property type="match status" value="1"/>
</dbReference>
<dbReference type="FunFam" id="3.40.50.300:FF:000040">
    <property type="entry name" value="GTPase Der"/>
    <property type="match status" value="1"/>
</dbReference>
<dbReference type="FunFam" id="3.40.50.300:FF:000057">
    <property type="entry name" value="GTPase Der"/>
    <property type="match status" value="1"/>
</dbReference>
<dbReference type="Gene3D" id="3.30.300.20">
    <property type="match status" value="1"/>
</dbReference>
<dbReference type="Gene3D" id="3.40.50.300">
    <property type="entry name" value="P-loop containing nucleotide triphosphate hydrolases"/>
    <property type="match status" value="2"/>
</dbReference>
<dbReference type="HAMAP" id="MF_00195">
    <property type="entry name" value="GTPase_Der"/>
    <property type="match status" value="1"/>
</dbReference>
<dbReference type="InterPro" id="IPR031166">
    <property type="entry name" value="G_ENGA"/>
</dbReference>
<dbReference type="InterPro" id="IPR006073">
    <property type="entry name" value="GTP-bd"/>
</dbReference>
<dbReference type="InterPro" id="IPR016484">
    <property type="entry name" value="GTPase_Der"/>
</dbReference>
<dbReference type="InterPro" id="IPR032859">
    <property type="entry name" value="KH_dom-like"/>
</dbReference>
<dbReference type="InterPro" id="IPR015946">
    <property type="entry name" value="KH_dom-like_a/b"/>
</dbReference>
<dbReference type="InterPro" id="IPR027417">
    <property type="entry name" value="P-loop_NTPase"/>
</dbReference>
<dbReference type="InterPro" id="IPR005225">
    <property type="entry name" value="Small_GTP-bd"/>
</dbReference>
<dbReference type="NCBIfam" id="TIGR03594">
    <property type="entry name" value="GTPase_EngA"/>
    <property type="match status" value="1"/>
</dbReference>
<dbReference type="NCBIfam" id="TIGR00231">
    <property type="entry name" value="small_GTP"/>
    <property type="match status" value="2"/>
</dbReference>
<dbReference type="PANTHER" id="PTHR43834">
    <property type="entry name" value="GTPASE DER"/>
    <property type="match status" value="1"/>
</dbReference>
<dbReference type="PANTHER" id="PTHR43834:SF6">
    <property type="entry name" value="GTPASE DER"/>
    <property type="match status" value="1"/>
</dbReference>
<dbReference type="Pfam" id="PF14714">
    <property type="entry name" value="KH_dom-like"/>
    <property type="match status" value="1"/>
</dbReference>
<dbReference type="Pfam" id="PF01926">
    <property type="entry name" value="MMR_HSR1"/>
    <property type="match status" value="2"/>
</dbReference>
<dbReference type="PIRSF" id="PIRSF006485">
    <property type="entry name" value="GTP-binding_EngA"/>
    <property type="match status" value="1"/>
</dbReference>
<dbReference type="PRINTS" id="PR00326">
    <property type="entry name" value="GTP1OBG"/>
</dbReference>
<dbReference type="SUPFAM" id="SSF52540">
    <property type="entry name" value="P-loop containing nucleoside triphosphate hydrolases"/>
    <property type="match status" value="2"/>
</dbReference>
<dbReference type="PROSITE" id="PS51712">
    <property type="entry name" value="G_ENGA"/>
    <property type="match status" value="2"/>
</dbReference>
<keyword id="KW-0342">GTP-binding</keyword>
<keyword id="KW-0547">Nucleotide-binding</keyword>
<keyword id="KW-0677">Repeat</keyword>
<keyword id="KW-0690">Ribosome biogenesis</keyword>